<name>P230_PLAFO</name>
<protein>
    <recommendedName>
        <fullName>Gametocyte surface protein P230</fullName>
    </recommendedName>
</protein>
<feature type="signal peptide" evidence="2">
    <location>
        <begin position="1"/>
        <end position="20"/>
    </location>
</feature>
<feature type="chain" id="PRO_0000024616" description="Gametocyte surface protein P230">
    <location>
        <begin position="21"/>
        <end position="3135"/>
    </location>
</feature>
<feature type="domain" description="6-Cys 1" evidence="3">
    <location>
        <begin position="589"/>
        <end position="730"/>
    </location>
</feature>
<feature type="domain" description="6-Cys 2" evidence="3">
    <location>
        <begin position="733"/>
        <end position="887"/>
    </location>
</feature>
<feature type="domain" description="6-Cys 3" evidence="3">
    <location>
        <begin position="918"/>
        <end position="1133"/>
    </location>
</feature>
<feature type="domain" description="6-Cys 4" evidence="3">
    <location>
        <begin position="1136"/>
        <end position="1275"/>
    </location>
</feature>
<feature type="domain" description="6-Cys 5" evidence="3">
    <location>
        <begin position="1285"/>
        <end position="1432"/>
    </location>
</feature>
<feature type="domain" description="6-Cys 6" evidence="3">
    <location>
        <begin position="1435"/>
        <end position="1560"/>
    </location>
</feature>
<feature type="domain" description="6-Cys 7" evidence="3">
    <location>
        <begin position="1694"/>
        <end position="1907"/>
    </location>
</feature>
<feature type="domain" description="6-Cys 8" evidence="3">
    <location>
        <begin position="1910"/>
        <end position="2035"/>
    </location>
</feature>
<feature type="domain" description="6-Cys 9" evidence="3">
    <location>
        <begin position="2052"/>
        <end position="2199"/>
    </location>
</feature>
<feature type="domain" description="6-Cys 10" evidence="3">
    <location>
        <begin position="2204"/>
        <end position="2374"/>
    </location>
</feature>
<feature type="domain" description="6-Cys 11" evidence="3">
    <location>
        <begin position="2448"/>
        <end position="2663"/>
    </location>
</feature>
<feature type="domain" description="6-Cys 12" evidence="3">
    <location>
        <begin position="2666"/>
        <end position="2827"/>
    </location>
</feature>
<feature type="domain" description="6-Cys 13" evidence="3">
    <location>
        <begin position="2831"/>
        <end position="2979"/>
    </location>
</feature>
<feature type="domain" description="6-Cys 14" evidence="3">
    <location>
        <begin position="2982"/>
        <end position="3113"/>
    </location>
</feature>
<feature type="region of interest" description="Disordered" evidence="4">
    <location>
        <begin position="266"/>
        <end position="470"/>
    </location>
</feature>
<feature type="region of interest" description="Disordered" evidence="4">
    <location>
        <begin position="2410"/>
        <end position="2432"/>
    </location>
</feature>
<feature type="compositionally biased region" description="Acidic residues" evidence="4">
    <location>
        <begin position="276"/>
        <end position="321"/>
    </location>
</feature>
<feature type="compositionally biased region" description="Acidic residues" evidence="4">
    <location>
        <begin position="329"/>
        <end position="345"/>
    </location>
</feature>
<feature type="compositionally biased region" description="Basic and acidic residues" evidence="4">
    <location>
        <begin position="346"/>
        <end position="358"/>
    </location>
</feature>
<feature type="compositionally biased region" description="Acidic residues" evidence="4">
    <location>
        <begin position="376"/>
        <end position="444"/>
    </location>
</feature>
<feature type="compositionally biased region" description="Acidic residues" evidence="4">
    <location>
        <begin position="458"/>
        <end position="467"/>
    </location>
</feature>
<feature type="compositionally biased region" description="Basic and acidic residues" evidence="4">
    <location>
        <begin position="2422"/>
        <end position="2432"/>
    </location>
</feature>
<feature type="glycosylation site" description="N-linked (GlcNAc...) asparagine" evidence="2">
    <location>
        <position position="76"/>
    </location>
</feature>
<feature type="glycosylation site" description="N-linked (GlcNAc...) asparagine" evidence="2">
    <location>
        <position position="111"/>
    </location>
</feature>
<feature type="glycosylation site" description="N-linked (GlcNAc...) asparagine" evidence="2">
    <location>
        <position position="135"/>
    </location>
</feature>
<feature type="glycosylation site" description="N-linked (GlcNAc...) asparagine" evidence="2">
    <location>
        <position position="239"/>
    </location>
</feature>
<feature type="glycosylation site" description="N-linked (GlcNAc...) asparagine" evidence="2">
    <location>
        <position position="585"/>
    </location>
</feature>
<feature type="glycosylation site" description="N-linked (GlcNAc...) asparagine" evidence="2">
    <location>
        <position position="821"/>
    </location>
</feature>
<feature type="glycosylation site" description="N-linked (GlcNAc...) asparagine" evidence="2">
    <location>
        <position position="829"/>
    </location>
</feature>
<feature type="glycosylation site" description="N-linked (GlcNAc...) asparagine" evidence="2">
    <location>
        <position position="889"/>
    </location>
</feature>
<feature type="glycosylation site" description="N-linked (GlcNAc...) asparagine" evidence="2">
    <location>
        <position position="961"/>
    </location>
</feature>
<feature type="glycosylation site" description="N-linked (GlcNAc...) asparagine" evidence="2">
    <location>
        <position position="1079"/>
    </location>
</feature>
<feature type="glycosylation site" description="N-linked (GlcNAc...) asparagine" evidence="2">
    <location>
        <position position="1089"/>
    </location>
</feature>
<feature type="glycosylation site" description="N-linked (GlcNAc...) asparagine" evidence="2">
    <location>
        <position position="1153"/>
    </location>
</feature>
<feature type="glycosylation site" description="N-linked (GlcNAc...) asparagine" evidence="2">
    <location>
        <position position="1267"/>
    </location>
</feature>
<feature type="glycosylation site" description="N-linked (GlcNAc...) asparagine" evidence="2">
    <location>
        <position position="1300"/>
    </location>
</feature>
<feature type="glycosylation site" description="N-linked (GlcNAc...) asparagine" evidence="2">
    <location>
        <position position="1452"/>
    </location>
</feature>
<feature type="glycosylation site" description="N-linked (GlcNAc...) asparagine" evidence="2">
    <location>
        <position position="1492"/>
    </location>
</feature>
<feature type="glycosylation site" description="N-linked (GlcNAc...) asparagine" evidence="2">
    <location>
        <position position="1508"/>
    </location>
</feature>
<feature type="glycosylation site" description="N-linked (GlcNAc...) asparagine" evidence="2">
    <location>
        <position position="1621"/>
    </location>
</feature>
<feature type="glycosylation site" description="N-linked (GlcNAc...) asparagine" evidence="2">
    <location>
        <position position="1624"/>
    </location>
</feature>
<feature type="glycosylation site" description="N-linked (GlcNAc...) asparagine" evidence="2">
    <location>
        <position position="1753"/>
    </location>
</feature>
<feature type="glycosylation site" description="N-linked (GlcNAc...) asparagine" evidence="2">
    <location>
        <position position="1804"/>
    </location>
</feature>
<feature type="glycosylation site" description="N-linked (GlcNAc...) asparagine" evidence="2">
    <location>
        <position position="1882"/>
    </location>
</feature>
<feature type="glycosylation site" description="N-linked (GlcNAc...) asparagine" evidence="2">
    <location>
        <position position="1920"/>
    </location>
</feature>
<feature type="glycosylation site" description="N-linked (GlcNAc...) asparagine" evidence="2">
    <location>
        <position position="1954"/>
    </location>
</feature>
<feature type="glycosylation site" description="N-linked (GlcNAc...) asparagine" evidence="2">
    <location>
        <position position="1972"/>
    </location>
</feature>
<feature type="glycosylation site" description="N-linked (GlcNAc...) asparagine" evidence="2">
    <location>
        <position position="2178"/>
    </location>
</feature>
<feature type="glycosylation site" description="N-linked (GlcNAc...) asparagine" evidence="2">
    <location>
        <position position="2199"/>
    </location>
</feature>
<feature type="glycosylation site" description="N-linked (GlcNAc...) asparagine" evidence="2">
    <location>
        <position position="2312"/>
    </location>
</feature>
<feature type="glycosylation site" description="N-linked (GlcNAc...) asparagine" evidence="2">
    <location>
        <position position="2351"/>
    </location>
</feature>
<feature type="glycosylation site" description="N-linked (GlcNAc...) asparagine" evidence="2">
    <location>
        <position position="2439"/>
    </location>
</feature>
<feature type="glycosylation site" description="N-linked (GlcNAc...) asparagine" evidence="2">
    <location>
        <position position="2457"/>
    </location>
</feature>
<feature type="glycosylation site" description="N-linked (GlcNAc...) asparagine" evidence="2">
    <location>
        <position position="2466"/>
    </location>
</feature>
<feature type="glycosylation site" description="N-linked (GlcNAc...) asparagine" evidence="2">
    <location>
        <position position="2504"/>
    </location>
</feature>
<feature type="glycosylation site" description="N-linked (GlcNAc...) asparagine" evidence="2">
    <location>
        <position position="2586"/>
    </location>
</feature>
<feature type="glycosylation site" description="N-linked (GlcNAc...) asparagine" evidence="2">
    <location>
        <position position="2611"/>
    </location>
</feature>
<feature type="glycosylation site" description="N-linked (GlcNAc...) asparagine" evidence="2">
    <location>
        <position position="2650"/>
    </location>
</feature>
<feature type="glycosylation site" description="N-linked (GlcNAc...) asparagine" evidence="2">
    <location>
        <position position="2677"/>
    </location>
</feature>
<feature type="glycosylation site" description="N-linked (GlcNAc...) asparagine" evidence="2">
    <location>
        <position position="2688"/>
    </location>
</feature>
<feature type="glycosylation site" description="N-linked (GlcNAc...) asparagine" evidence="2">
    <location>
        <position position="2952"/>
    </location>
</feature>
<feature type="glycosylation site" description="N-linked (GlcNAc...) asparagine" evidence="2">
    <location>
        <position position="3011"/>
    </location>
</feature>
<feature type="glycosylation site" description="N-linked (GlcNAc...) asparagine" evidence="2">
    <location>
        <position position="3016"/>
    </location>
</feature>
<feature type="glycosylation site" description="N-linked (GlcNAc...) asparagine" evidence="2">
    <location>
        <position position="3066"/>
    </location>
</feature>
<feature type="glycosylation site" description="N-linked (GlcNAc...) asparagine" evidence="2">
    <location>
        <position position="3093"/>
    </location>
</feature>
<feature type="glycosylation site" description="N-linked (GlcNAc...) asparagine" evidence="2">
    <location>
        <position position="3096"/>
    </location>
</feature>
<feature type="disulfide bond" evidence="3">
    <location>
        <begin position="593"/>
        <end position="611"/>
    </location>
</feature>
<feature type="disulfide bond" evidence="3">
    <location>
        <begin position="626"/>
        <end position="706"/>
    </location>
</feature>
<feature type="disulfide bond" evidence="3">
    <location>
        <begin position="737"/>
        <end position="781"/>
    </location>
</feature>
<feature type="disulfide bond" evidence="3">
    <location>
        <begin position="804"/>
        <end position="862"/>
    </location>
</feature>
<feature type="disulfide bond" evidence="3">
    <location>
        <begin position="1140"/>
        <end position="1161"/>
    </location>
</feature>
<feature type="disulfide bond" evidence="3">
    <location>
        <begin position="1175"/>
        <end position="1251"/>
    </location>
</feature>
<feature type="disulfide bond" evidence="3">
    <location>
        <begin position="1200"/>
        <end position="1249"/>
    </location>
</feature>
<feature type="disulfide bond" evidence="3">
    <location>
        <begin position="1439"/>
        <end position="1459"/>
    </location>
</feature>
<feature type="disulfide bond" evidence="3">
    <location>
        <begin position="1473"/>
        <end position="1534"/>
    </location>
</feature>
<feature type="disulfide bond" evidence="3">
    <location>
        <begin position="1483"/>
        <end position="1532"/>
    </location>
</feature>
<feature type="disulfide bond" evidence="3">
    <location>
        <begin position="1698"/>
        <end position="1726"/>
    </location>
</feature>
<feature type="disulfide bond" evidence="3">
    <location>
        <begin position="1740"/>
        <end position="1881"/>
    </location>
</feature>
<feature type="disulfide bond" evidence="3">
    <location>
        <begin position="1914"/>
        <end position="1938"/>
    </location>
</feature>
<feature type="disulfide bond" evidence="3">
    <location>
        <begin position="1952"/>
        <end position="2017"/>
    </location>
</feature>
<feature type="disulfide bond" evidence="3">
    <location>
        <begin position="1963"/>
        <end position="2015"/>
    </location>
</feature>
<feature type="disulfide bond" evidence="3">
    <location>
        <begin position="2056"/>
        <end position="2074"/>
    </location>
</feature>
<feature type="disulfide bond" evidence="3">
    <location>
        <begin position="2208"/>
        <end position="2229"/>
    </location>
</feature>
<feature type="disulfide bond" evidence="3">
    <location>
        <begin position="2243"/>
        <end position="2356"/>
    </location>
</feature>
<feature type="disulfide bond" evidence="3">
    <location>
        <begin position="2254"/>
        <end position="2354"/>
    </location>
</feature>
<feature type="disulfide bond" evidence="3">
    <location>
        <begin position="2452"/>
        <end position="2476"/>
    </location>
</feature>
<feature type="disulfide bond" evidence="3">
    <location>
        <begin position="2490"/>
        <end position="2638"/>
    </location>
</feature>
<feature type="disulfide bond" evidence="3">
    <location>
        <begin position="2670"/>
        <end position="2706"/>
    </location>
</feature>
<feature type="disulfide bond" evidence="3">
    <location>
        <begin position="2720"/>
        <end position="2804"/>
    </location>
</feature>
<feature type="disulfide bond" evidence="3">
    <location>
        <begin position="2730"/>
        <end position="2802"/>
    </location>
</feature>
<feature type="disulfide bond" evidence="3">
    <location>
        <begin position="2986"/>
        <end position="3010"/>
    </location>
</feature>
<feature type="disulfide bond" evidence="3">
    <location>
        <begin position="3024"/>
        <end position="3090"/>
    </location>
</feature>
<feature type="disulfide bond" evidence="3">
    <location>
        <begin position="3035"/>
        <end position="3088"/>
    </location>
</feature>
<keyword id="KW-1003">Cell membrane</keyword>
<keyword id="KW-0903">Direct protein sequencing</keyword>
<keyword id="KW-1015">Disulfide bond</keyword>
<keyword id="KW-0325">Glycoprotein</keyword>
<keyword id="KW-0461">Malaria</keyword>
<keyword id="KW-0472">Membrane</keyword>
<keyword id="KW-0677">Repeat</keyword>
<keyword id="KW-0732">Signal</keyword>
<evidence type="ECO:0000250" key="1">
    <source>
        <dbReference type="UniProtKB" id="P68874"/>
    </source>
</evidence>
<evidence type="ECO:0000255" key="2"/>
<evidence type="ECO:0000255" key="3">
    <source>
        <dbReference type="PROSITE-ProRule" id="PRU01038"/>
    </source>
</evidence>
<evidence type="ECO:0000256" key="4">
    <source>
        <dbReference type="SAM" id="MobiDB-lite"/>
    </source>
</evidence>
<evidence type="ECO:0000269" key="5">
    <source>
    </source>
</evidence>
<evidence type="ECO:0000269" key="6">
    <source>
    </source>
</evidence>
<evidence type="ECO:0000269" key="7">
    <source>
    </source>
</evidence>
<evidence type="ECO:0000305" key="8">
    <source>
    </source>
</evidence>
<reference key="1">
    <citation type="journal article" date="1993" name="Mol. Biochem. Parasitol.">
        <title>Cloning and expression of the gene for Plasmodium falciparum transmission-blocking target antigen, Pfs230.</title>
        <authorList>
            <person name="Williamson K.C."/>
            <person name="Criscio M.D."/>
            <person name="Kaslow D.C."/>
        </authorList>
    </citation>
    <scope>NUCLEOTIDE SEQUENCE [MRNA]</scope>
    <scope>PARTIAL PROTEIN SEQUENCE</scope>
    <scope>DEVELOPMENTAL STAGE</scope>
    <scope>SUBCELLULAR LOCATION</scope>
</reference>
<reference key="2">
    <citation type="journal article" date="2020" name="Commun. Biol.">
        <title>Structure and function of a malaria transmission blocking vaccine targeting Pfs230 and Pfs230-Pfs48/45 proteins.</title>
        <authorList>
            <person name="Singh K."/>
            <person name="Burkhardt M."/>
            <person name="Nakuchima S."/>
            <person name="Herrera R."/>
            <person name="Muratova O."/>
            <person name="Gittis A.G."/>
            <person name="Kelnhofer E."/>
            <person name="Reiter K."/>
            <person name="Smelkinson M."/>
            <person name="Veltri D."/>
            <person name="Swihart B.J."/>
            <person name="Shimp R. Jr."/>
            <person name="Nguyen V."/>
            <person name="Zhang B."/>
            <person name="MacDonald N.J."/>
            <person name="Duffy P.E."/>
            <person name="Garboczi D.N."/>
            <person name="Narum D.L."/>
        </authorList>
    </citation>
    <scope>SUBCELLULAR LOCATION</scope>
    <scope>DEVELOPMENTAL STAGE</scope>
    <scope>BIOTECHNOLOGY</scope>
</reference>
<reference key="3">
    <citation type="journal article" date="2021" name="Nat. Commun.">
        <title>A human monoclonal antibody blocks malaria transmission and defines a highly conserved neutralizing epitope on gametes.</title>
        <authorList>
            <person name="Coelho C.H."/>
            <person name="Tang W.K."/>
            <person name="Burkhardt M."/>
            <person name="Galson J.D."/>
            <person name="Muratova O."/>
            <person name="Salinas N.D."/>
            <person name="Alves E Silva T.L."/>
            <person name="Reiter K."/>
            <person name="MacDonald N.J."/>
            <person name="Nguyen V."/>
            <person name="Herrera R."/>
            <person name="Shimp R."/>
            <person name="Narum D.L."/>
            <person name="Byrne-Steele M."/>
            <person name="Pan W."/>
            <person name="Hou X."/>
            <person name="Brown B."/>
            <person name="Eisenhower M."/>
            <person name="Han J."/>
            <person name="Jenkins B.J."/>
            <person name="Doritchamou J.Y.A."/>
            <person name="Smelkinson M.G."/>
            <person name="Vega-Rodriguez J."/>
            <person name="Trueck J."/>
            <person name="Taylor J.J."/>
            <person name="Sagara I."/>
            <person name="Renn J.P."/>
            <person name="Tolia N.H."/>
            <person name="Duffy P.E."/>
        </authorList>
    </citation>
    <scope>SUBCELLULAR LOCATION</scope>
    <scope>DEVELOPMENTAL STAGE</scope>
    <scope>BIOTECHNOLOGY</scope>
</reference>
<gene>
    <name type="primary">PF230</name>
    <name type="synonym">S230</name>
</gene>
<accession>P68875</accession>
<accession>Q08372</accession>
<dbReference type="EMBL" id="L08135">
    <property type="protein sequence ID" value="AAA29734.1"/>
    <property type="molecule type" value="mRNA"/>
</dbReference>
<dbReference type="PIR" id="A48584">
    <property type="entry name" value="A48584"/>
</dbReference>
<dbReference type="SMR" id="P68875"/>
<dbReference type="GlyCosmos" id="P68875">
    <property type="glycosylation" value="44 sites, No reported glycans"/>
</dbReference>
<dbReference type="VEuPathDB" id="PlasmoDB:PfNF54_020013800"/>
<dbReference type="GO" id="GO:0009986">
    <property type="term" value="C:cell surface"/>
    <property type="evidence" value="ECO:0007669"/>
    <property type="project" value="UniProtKB-SubCell"/>
</dbReference>
<dbReference type="GO" id="GO:0005886">
    <property type="term" value="C:plasma membrane"/>
    <property type="evidence" value="ECO:0007669"/>
    <property type="project" value="UniProtKB-SubCell"/>
</dbReference>
<dbReference type="FunFam" id="2.60.40.2860:FF:000004">
    <property type="entry name" value="Transmission-blocking target antigen S230"/>
    <property type="match status" value="1"/>
</dbReference>
<dbReference type="FunFam" id="2.60.40.2860:FF:000007">
    <property type="entry name" value="Transmission-blocking target antigen S230"/>
    <property type="match status" value="1"/>
</dbReference>
<dbReference type="FunFam" id="2.60.40.2860:FF:000009">
    <property type="entry name" value="Transmission-blocking target antigen S230"/>
    <property type="match status" value="1"/>
</dbReference>
<dbReference type="FunFam" id="2.60.40.2860:FF:000015">
    <property type="entry name" value="Transmission-blocking target antigen s230"/>
    <property type="match status" value="1"/>
</dbReference>
<dbReference type="Gene3D" id="2.60.40.2860">
    <property type="match status" value="9"/>
</dbReference>
<dbReference type="InterPro" id="IPR010884">
    <property type="entry name" value="6_CYS_dom"/>
</dbReference>
<dbReference type="InterPro" id="IPR038160">
    <property type="entry name" value="6_CYS_dom_sf"/>
</dbReference>
<dbReference type="InterPro" id="IPR051444">
    <property type="entry name" value="Parasite_Repro/Invasion_Surf"/>
</dbReference>
<dbReference type="PANTHER" id="PTHR38796">
    <property type="match status" value="1"/>
</dbReference>
<dbReference type="PANTHER" id="PTHR38796:SF1">
    <property type="entry name" value="ANCHORED PROTEIN, PUTATIVE (AFU_ORTHOLOGUE AFUA_4G09600)-RELATED"/>
    <property type="match status" value="1"/>
</dbReference>
<dbReference type="Pfam" id="PF07422">
    <property type="entry name" value="s48_45"/>
    <property type="match status" value="7"/>
</dbReference>
<dbReference type="SMART" id="SM00970">
    <property type="entry name" value="s48_45"/>
    <property type="match status" value="9"/>
</dbReference>
<dbReference type="PROSITE" id="PS51701">
    <property type="entry name" value="6_CYS"/>
    <property type="match status" value="14"/>
</dbReference>
<comment type="function">
    <text evidence="1">Gametocyte surface protein required for male/female gamete fusion. Also required for male gamete exflagellation and interaction with erythrocytes.</text>
</comment>
<comment type="subunit">
    <text evidence="1">Heterodimer; heterodimerizes with PF45/48.</text>
</comment>
<comment type="subcellular location">
    <subcellularLocation>
        <location evidence="5 6 7">Cell surface</location>
    </subcellularLocation>
    <subcellularLocation>
        <location evidence="5 6 7">Cell membrane</location>
        <topology evidence="8">Peripheral membrane protein</topology>
        <orientation evidence="6">Extracellular side</orientation>
    </subcellularLocation>
</comment>
<comment type="developmental stage">
    <text evidence="5 6 7">Specifically expressed in gametocytes, gametes, and zygotes (at protein level) (PubMed:32709983, PubMed:33741942, PubMed:8479460). Not expressed in ookinetes (PubMed:33741942).</text>
</comment>
<comment type="PTM">
    <text evidence="1">May be processed into a 310 kDa form as the parasite emerges from the host erythrocytes.</text>
</comment>
<comment type="biotechnology">
    <text evidence="5 6">Promising transmission-blocking vaccine candidate: targeting the protein would prevents transmission of the parasite decreasing the malaria burden (PubMed:32709983, PubMed:33741942). Antibodies against the 6-Cys domain 1 when given together with parasite gametocytes prevents transmission in the mosquito (PubMed:32709983, PubMed:33741942).</text>
</comment>
<organism>
    <name type="scientific">Plasmodium falciparum (isolate NF54)</name>
    <dbReference type="NCBI Taxonomy" id="5843"/>
    <lineage>
        <taxon>Eukaryota</taxon>
        <taxon>Sar</taxon>
        <taxon>Alveolata</taxon>
        <taxon>Apicomplexa</taxon>
        <taxon>Aconoidasida</taxon>
        <taxon>Haemosporida</taxon>
        <taxon>Plasmodiidae</taxon>
        <taxon>Plasmodium</taxon>
        <taxon>Plasmodium (Laverania)</taxon>
    </lineage>
</organism>
<proteinExistence type="evidence at protein level"/>
<sequence>MKKIITLKNLFLIILVYIFSEKKDLRCNVIKGNNIKDDEDKRFHLFYYSHNLFKTPETKEKKNKKECFYKNGGIYNLSKEIRMRKDTSVKIKQRTCPFHKEGSSFEMGSKNITCFYPIVGKKERKTLDTIIIKKNVTNDHVVSSDMHSNVQEKNMILIRNIDKENKNDIQNVEEKIQRDTYENKDYESDDTLIEWFDDNTNEENFLLTFLKRCLMKIFSSPKRKKTVVQKKHKSNFFINSSLKYIYMYLTPSDSFNLVRRNRNLDEEDMSPRDNFVIDDEEEEEEEEEEEEEEEEEEEEEEEEEYDDYVYEESGDETEEQLQEEHQEEVGAESSEESFNDEDEDSVEARDGDMIRVDEYYEDQDGDTYDSTIKNEDVDEEVGEEVGEEVGEEVGEEVGEEVGEEVGEEVGEEVGEEEGEEVGEGVGEEVGEEEGEEVGEEEGEYVDEKERQGEIYPFGDEEEKDEGGESFTYEKSEVDKTDLFKFIEGGEGDDVYKVDGSKVLLDDDTISRVSKKHTARDGEYGEYGEAVEDGENVIKIIRSVLQSGALPSVGVDELDKIDLSYETTESGDTAVSEDSYDKYASNNTNKEYVCDFTDQLKPTESGPKVKKCEVKVNEPLIKVKIICPLKGSVEKLYDNIEYVPKKSPYVVLTKEETKLKEKLLSKLIYGLLISPTVNEKENNFKEGVIEFTLPPVVHKATVFYFICDNSKTEDDNKKGNRGIVEVYVEPYGNKINGCAFLDEDEEEEKYGNQIEEDEHNEKIKMKTFFTQNIYKKNNIYPCYMKLYSGDIGGILFPKNIKSTTCFEEMIPYNKEIKWNKENKSLGNLVNNSVVYNKEMNAKYFNVQYVHIPTSYKDTLNLFCSIILKEEESNLISTSYLVYVSINEELNFSLFDFYESFVPIKKTIQVAQKNVNNKEHDYTCDFTDKLDKTVPSTANGKKLFICRKHLKEFDTFTLKCNVNKTQYPNIEIFPKTLKDKKEVLKLDLDIQYQMFSKFFKFNTQNAKYLNLYPYYLIFPFNHIGKKELKNNPTYKNHKDVKYFEQSSVLSPLSSADSLGKLLNFLDTQETVCLTEKIRYLNLSINELGSDNNTFSVTFQVPPYIDIKEPFYFMFGCNNNKGEGNIGIVELLISKQEEKIKGCNFHESKLDYFNENISSDTHECTLHAYENDIIGFNCLETTHPNEVEVEVEDAEIYLQPENCFNNVYKGLNSVDITTILKNAQTYNINNKKTPTFLKIPPYNLLEDVEISCQCTIKQVVKKIKVIITKNDTVLLKREVQSESTLDDKIYKCEHENFINPRVNKTFDENVEYTCNIKIENFFNYIQIFCPAKDLGIYKNIQMYYDIVKPTRVPQFKKFNNEELHKLIPNSEMLHKTKEMLILYNEEKVDLLHFYVFLPIYIKDIYEFNIVCDNSKTMWKNQLGGKVIYHITVSKREQKVKGCSFDNEHAHMFSYNKTNVKNCIIDAKPKDLIGFVCPSGTLKLTNCFKDAIVHTNLTNINGILYLKNNLANFTYKHQFNYMEIPALMDNDISFKCICVDLKKKKYNVKSPLGPKVLRALYKKLNIKFDNYVTGTDQNKYLMTYMDLHLSHKRNYLKELFHDLGKKKPADTDANPESIIESLSINESNESGPFPTGDVDAEHLILEGYDTWESLYDEQLEEVIYNDIESLELKDIEQYVLQVNLKAPKLMMSAQIHNNRHVCDFSKNNLIVPESLKKKEELGGNPVNIHCYALLKPLDTLYVKCPTSKDNYEAAKVNISENDNEYELQVISLIEKRFHNFETLESKKPGNGDVVVHNGVVDTGPVLDNSTFEKYFKNIKIKPDKFFEKVINEYDDTEEEKDLESILPGAIVSPMKVLKKKDPFTSYAAFVVPPIVPKDLHFKVECNNTEYKDENQYISGYNGIIHIDISNSNRKINGCDFSTNNSSILTSSVKLVNGETKNCEININNNEVFGIICDNETNLDPEKCFHEIYSKDNKTVKKFREVIPNIDIFSLHNSNKKKVAYAKVPLDYINKLLFSCSCKTSHTNTIGTMKVTLNKDEKEEEDFKTAQGIKHNNVHLCNFFDNPELTFDNNKIVLCKIDAELFSEVIIQLPIFGTKNVEEGVQNEEYKKFSLKPSLVFDDNNNDIKVIGKEKNEVSISLALKGVYGNRIFTFDKNGKKGEGISFFIPPIKQDTDLKFIINETIDNSNIKQRGLIYIFVRKNVSENSFKLCDFTTGSTSLMELNSQVKEKKCTVKIKKGDIFGLKCPKGFAIFPQACFSNVLLEYYKSDYEDSEHINYYIHKDKKYNLKPKDVIELMDENFRELQNIQQYTGISNITDVLHFKNFNLGNLPLNFKNHYSTAYAKVPDTFNSIINFSCNCYNPEKHVYGTMQVESDNRNFDNIKKNENVIKNFLLPNIEKYALLLDDEERQKKIKQQQEEEQQEQILKDQDDRLSRHDDYNKNHTYILYDSNEHICDYEKNESLISTLPNDTKKIQKSICKINAKALDVVTIKCPHTKNFTPKDYFPNSSLITNDKKIVITFDKKNFVTYIDPTKKTFSLKDIYIQSFYGVSLDHLNQIKKIHEEWDDVHLFYPPHNVLHNVVLNNHIVNLSSALEGVLFMKSKVTGDETATKKNTTLPTDGVSSILIPPYVKEDITFHLFCGKSTTKKPNKKNTSLALIHIHISSNRNIIHGCDFLYLENQTNDAISNNNNNSYSIFTHNKNTENNLICDISLIPKTVIGIKCPNKKLNPQTCFDEVYYVKQEDVPSKTITADKYNTFSKDKIGNILKNAISINNPDEKDNTYTYLILPEKFEEELIDTKKVLACTCDNKYIIHMKIEKSTMDKIKIDEKKTIGKDICKYDVTTKVATCEIIDTIDSSVLKEHHTVHYSITLSRWDKLIIKYPTNEKTHFENFFVNPFNLKDKVLYNYNKPINIEHILPGAITTDIYDTRTKIKQYILRIPPYVHKDIHFSLEFNNSLSLTKQNQNIIYGNVAKIFIHINQGYKEIHGCDFTGKYSHLFTYSKKPLPNDDDICNVTIGNNTFSGFACLSHFELKPNNCFSSVYDYNEANKVKKLFDLSTKVELDHIKQNTSGYTLSYIIFNKESTKLKFSCTCSSNYSNYTIRITFDPNYIIPEPQSRAIIKYVDLQDKNFAKYLRKL</sequence>